<evidence type="ECO:0000255" key="1">
    <source>
        <dbReference type="HAMAP-Rule" id="MF_04134"/>
    </source>
</evidence>
<evidence type="ECO:0000256" key="2">
    <source>
        <dbReference type="SAM" id="MobiDB-lite"/>
    </source>
</evidence>
<evidence type="ECO:0000269" key="3">
    <source>
    </source>
</evidence>
<evidence type="ECO:0000269" key="4">
    <source>
    </source>
</evidence>
<organism>
    <name type="scientific">Escherichia phage lambda</name>
    <name type="common">Bacteriophage lambda</name>
    <dbReference type="NCBI Taxonomy" id="2681611"/>
    <lineage>
        <taxon>Viruses</taxon>
        <taxon>Duplodnaviria</taxon>
        <taxon>Heunggongvirae</taxon>
        <taxon>Uroviricota</taxon>
        <taxon>Caudoviricetes</taxon>
        <taxon>Lambdavirus</taxon>
        <taxon>Lambdavirus lambda</taxon>
    </lineage>
</organism>
<accession>P03734</accession>
<protein>
    <recommendedName>
        <fullName evidence="1">Tail assembly protein G</fullName>
    </recommendedName>
    <alternativeName>
        <fullName evidence="1">Gene product G</fullName>
        <shortName evidence="1">gpG</shortName>
    </alternativeName>
    <alternativeName>
        <fullName evidence="1">Minor tail protein G</fullName>
    </alternativeName>
    <alternativeName>
        <fullName evidence="1">Tail assembly chaperone</fullName>
        <shortName evidence="1">TAC</shortName>
    </alternativeName>
</protein>
<dbReference type="EMBL" id="J02459">
    <property type="protein sequence ID" value="AAA96546.1"/>
    <property type="molecule type" value="Genomic_DNA"/>
</dbReference>
<dbReference type="EMBL" id="S66722">
    <property type="protein sequence ID" value="AAB28723.1"/>
    <property type="molecule type" value="Genomic_DNA"/>
</dbReference>
<dbReference type="PIR" id="C43014">
    <property type="entry name" value="TLBPTL"/>
</dbReference>
<dbReference type="PIR" id="E43008">
    <property type="entry name" value="TLBPGL"/>
</dbReference>
<dbReference type="RefSeq" id="NP_040593.1">
    <molecule id="P03734-1"/>
    <property type="nucleotide sequence ID" value="NC_001416.1"/>
</dbReference>
<dbReference type="IntAct" id="P03734">
    <property type="interactions" value="12"/>
</dbReference>
<dbReference type="GeneID" id="2703488"/>
<dbReference type="KEGG" id="vg:2703488"/>
<dbReference type="Proteomes" id="UP000001711">
    <property type="component" value="Genome"/>
</dbReference>
<dbReference type="GO" id="GO:0030430">
    <property type="term" value="C:host cell cytoplasm"/>
    <property type="evidence" value="ECO:0007669"/>
    <property type="project" value="UniProtKB-SubCell"/>
</dbReference>
<dbReference type="GO" id="GO:0098003">
    <property type="term" value="P:viral tail assembly"/>
    <property type="evidence" value="ECO:0000314"/>
    <property type="project" value="UniProtKB"/>
</dbReference>
<dbReference type="GO" id="GO:0075523">
    <property type="term" value="P:viral translational frameshifting"/>
    <property type="evidence" value="ECO:0007669"/>
    <property type="project" value="UniProtKB-KW"/>
</dbReference>
<dbReference type="HAMAP" id="MF_04134">
    <property type="entry name" value="GT_LAMBD"/>
    <property type="match status" value="1"/>
</dbReference>
<dbReference type="InterPro" id="IPR010027">
    <property type="entry name" value="Tail_assembly_G"/>
</dbReference>
<dbReference type="InterPro" id="IPR043704">
    <property type="entry name" value="Tail_assembly_GT"/>
</dbReference>
<dbReference type="NCBIfam" id="TIGR01674">
    <property type="entry name" value="phage_lambda_G"/>
    <property type="match status" value="1"/>
</dbReference>
<dbReference type="Pfam" id="PF06894">
    <property type="entry name" value="Phage_TAC_2"/>
    <property type="match status" value="1"/>
</dbReference>
<feature type="chain" id="PRO_0000077665" description="Tail assembly protein G">
    <location>
        <begin position="1"/>
        <end position="140"/>
    </location>
</feature>
<feature type="region of interest" description="Disordered" evidence="2">
    <location>
        <begin position="121"/>
        <end position="140"/>
    </location>
</feature>
<sequence>MFLKTESFEHNGVTVTLSELSALQRIEHLALMKRQAEQAESDSNRKFTVEDAIRTGAFLVAMSLWHNHPQKTQMPSMNEAVKQIEQEVLTTWPTEAISHAENVVYRLSGMYEFVVNNAPEQTEDAGPAEPVSAGKCSTVS</sequence>
<name>G_LAMBD</name>
<keyword id="KW-1035">Host cytoplasm</keyword>
<keyword id="KW-0426">Late protein</keyword>
<keyword id="KW-1185">Reference proteome</keyword>
<keyword id="KW-0688">Ribosomal frameshifting</keyword>
<keyword id="KW-1188">Viral release from host cell</keyword>
<keyword id="KW-1245">Viral tail assembly</keyword>
<organismHost>
    <name type="scientific">Escherichia coli</name>
    <dbReference type="NCBI Taxonomy" id="562"/>
</organismHost>
<comment type="function">
    <text evidence="1 3 4">Promotes tail assembly by creating a scaffold for the tail tube proteins. Tail assembly proteins G and GT probably wrap the linear tape measure protein to create a tail assembly scaffold. This allows the polymerization of the tail tube protein, during which G and GT are released, therefore they are absent in the mature virion. The tail assembly protein GT is produced by a rare -1 ribosomal frameshift. The ratio of translated G/GT is about 20, and this ratio is important for proper tail assembly.</text>
</comment>
<comment type="subunit">
    <text evidence="1 4">Interacts with the tail assembly protein GT and the tape measure protein.</text>
</comment>
<comment type="subcellular location">
    <subcellularLocation>
        <location evidence="1">Host cytoplasm</location>
    </subcellularLocation>
</comment>
<comment type="alternative products">
    <event type="ribosomal frameshifting"/>
    <isoform>
        <id>P03734-1</id>
        <name>Tail assembly protein G</name>
        <sequence type="displayed"/>
    </isoform>
    <isoform>
        <id>P03735-1</id>
        <name>Tail assembly protein GT</name>
        <sequence type="external"/>
    </isoform>
    <text>The tail assembly protein GT is produced by a rare -1 ribosomal frameshift. This expression strategy assures a fixed ration of G/GT.</text>
</comment>
<comment type="miscellaneous">
    <molecule>Isoform Tail assembly protein G</molecule>
    <text>Main product of the GT gene, representing 96% of the translated protein.</text>
</comment>
<comment type="similarity">
    <text evidence="1">Belongs to the lambda-like tail assembly protein family.</text>
</comment>
<proteinExistence type="evidence at protein level"/>
<gene>
    <name type="primary">G</name>
    <name type="ordered locus">lambdap14</name>
</gene>
<reference key="1">
    <citation type="journal article" date="1982" name="J. Mol. Biol.">
        <title>Nucleotide sequence of bacteriophage lambda DNA.</title>
        <authorList>
            <person name="Sanger F."/>
            <person name="Coulson A.R."/>
            <person name="Hong G.F."/>
            <person name="Hill D.F."/>
            <person name="Petersen G.B."/>
        </authorList>
    </citation>
    <scope>NUCLEOTIDE SEQUENCE [LARGE SCALE GENOMIC DNA]</scope>
</reference>
<reference key="2">
    <citation type="journal article" date="1993" name="J. Mol. Biol.">
        <title>A programmed translational frameshift is required for the synthesis of a bacteriophage lambda tail assembly protein.</title>
        <authorList>
            <person name="Levin M.E."/>
            <person name="Hendrix R.W."/>
            <person name="Casjens S.R."/>
        </authorList>
    </citation>
    <scope>NUCLEOTIDE SEQUENCE [GENOMIC DNA] OF 117-140</scope>
</reference>
<reference key="3">
    <citation type="journal article" date="2013" name="J. Mol. Biol.">
        <title>A balanced ratio of proteins from gene G and frameshift-extended gene GT is required for phage lambda tail assembly.</title>
        <authorList>
            <person name="Xu J."/>
            <person name="Hendrix R.W."/>
            <person name="Duda R.L."/>
        </authorList>
    </citation>
    <scope>FUNCTION</scope>
</reference>
<reference key="4">
    <citation type="journal article" date="2014" name="J. Mol. Biol.">
        <title>Chaperone-protein interactions that mediate assembly of the bacteriophage lambda tail to the correct length.</title>
        <authorList>
            <person name="Xu J."/>
            <person name="Hendrix R.W."/>
            <person name="Duda R.L."/>
        </authorList>
    </citation>
    <scope>FUNCTION</scope>
    <scope>INTERACTION WITH THE TAIL ASSEMBLY PROTEIN GT</scope>
    <scope>INTERACTION WITH TAPE MEASURE PROTEIN</scope>
</reference>
<reference key="5">
    <citation type="journal article" date="2004" name="Mol. Cell">
        <title>Conserved translational frameshift in dsDNA bacteriophage tail assembly genes.</title>
        <authorList>
            <person name="Xu J."/>
            <person name="Hendrix R.W."/>
            <person name="Duda R.L."/>
        </authorList>
    </citation>
    <scope>REVIEW</scope>
</reference>